<keyword id="KW-0007">Acetylation</keyword>
<keyword id="KW-0963">Cytoplasm</keyword>
<keyword id="KW-0378">Hydrolase</keyword>
<keyword id="KW-0479">Metal-binding</keyword>
<keyword id="KW-0482">Metalloprotease</keyword>
<keyword id="KW-0597">Phosphoprotein</keyword>
<keyword id="KW-0645">Protease</keyword>
<keyword id="KW-1185">Reference proteome</keyword>
<keyword id="KW-0862">Zinc</keyword>
<comment type="function">
    <text evidence="1 3">Involved in the metabolism of neuropeptides under 20 amino acid residues long (By similarity). Involved in cytoplasmic peptide degradation. Able to degrade the amyloid-beta precursor protein and generate amyloidogenic fragments (By similarity). Also acts as a regulator of cannabinoid signaling pathway by mediating degradation of hemopressin, an antagonist peptide of the cannabinoid receptor CNR1 (By similarity).</text>
</comment>
<comment type="catalytic activity">
    <reaction evidence="3">
        <text>Preferential cleavage of bonds with hydrophobic residues at P1, P2 and P3' and a small residue at P1' in substrates of 5 to 15 residues.</text>
        <dbReference type="EC" id="3.4.24.15"/>
    </reaction>
</comment>
<comment type="cofactor">
    <cofactor evidence="3">
        <name>Zn(2+)</name>
        <dbReference type="ChEBI" id="CHEBI:29105"/>
    </cofactor>
    <text evidence="3">Binds 1 zinc ion per subunit.</text>
</comment>
<comment type="subunit">
    <text evidence="2">Monomer.</text>
</comment>
<comment type="subcellular location">
    <subcellularLocation>
        <location evidence="2">Cytoplasm</location>
    </subcellularLocation>
</comment>
<comment type="similarity">
    <text evidence="6">Belongs to the peptidase M3 family.</text>
</comment>
<feature type="chain" id="PRO_0000263069" description="Thimet oligopeptidase">
    <location>
        <begin position="1"/>
        <end position="687"/>
    </location>
</feature>
<feature type="active site" evidence="5">
    <location>
        <position position="474"/>
    </location>
</feature>
<feature type="binding site" evidence="5">
    <location>
        <position position="473"/>
    </location>
    <ligand>
        <name>Zn(2+)</name>
        <dbReference type="ChEBI" id="CHEBI:29105"/>
        <note>catalytic</note>
    </ligand>
</feature>
<feature type="binding site" evidence="5">
    <location>
        <position position="477"/>
    </location>
    <ligand>
        <name>Zn(2+)</name>
        <dbReference type="ChEBI" id="CHEBI:29105"/>
        <note>catalytic</note>
    </ligand>
</feature>
<feature type="binding site" evidence="5">
    <location>
        <position position="480"/>
    </location>
    <ligand>
        <name>Zn(2+)</name>
        <dbReference type="ChEBI" id="CHEBI:29105"/>
        <note>catalytic</note>
    </ligand>
</feature>
<feature type="modified residue" description="Phosphoserine" evidence="4">
    <location>
        <position position="172"/>
    </location>
</feature>
<feature type="modified residue" description="Phosphotyrosine" evidence="4">
    <location>
        <position position="278"/>
    </location>
</feature>
<feature type="modified residue" description="N6-acetyllysine" evidence="3">
    <location>
        <position position="538"/>
    </location>
</feature>
<feature type="sequence conflict" description="In Ref. 2; AAI49984." evidence="6" ref="2">
    <original>C</original>
    <variation>R</variation>
    <location>
        <position position="50"/>
    </location>
</feature>
<protein>
    <recommendedName>
        <fullName>Thimet oligopeptidase</fullName>
        <ecNumber evidence="3">3.4.24.15</ecNumber>
    </recommendedName>
</protein>
<gene>
    <name type="primary">THOP1</name>
</gene>
<evidence type="ECO:0000250" key="1">
    <source>
        <dbReference type="UniProtKB" id="P24155"/>
    </source>
</evidence>
<evidence type="ECO:0000250" key="2">
    <source>
        <dbReference type="UniProtKB" id="P47788"/>
    </source>
</evidence>
<evidence type="ECO:0000250" key="3">
    <source>
        <dbReference type="UniProtKB" id="P52888"/>
    </source>
</evidence>
<evidence type="ECO:0000250" key="4">
    <source>
        <dbReference type="UniProtKB" id="Q8C1A5"/>
    </source>
</evidence>
<evidence type="ECO:0000255" key="5">
    <source>
        <dbReference type="PROSITE-ProRule" id="PRU10095"/>
    </source>
</evidence>
<evidence type="ECO:0000305" key="6"/>
<sequence>MKPPAACTGDALDVVAPCSAVNHLRWDLSAQQIAELTTELIEQTKRVYDCVGAQEPQDVSYENTLKALADVEVSYTVQRNILDFPQHVSPSKDIRTASTEADKKLSEFDVEMSMRQDVYQRIVWLQEKVQKDSLRPEASRYLERLIKLGRRNGLHLPEETQEKIKSIKKKLSLLCIDFNKNLNEDTTFLPFTREELGGLPEDFLNSLEKTEDEKLKVTLKYPHYFPLLKKCHVPETRRKVEEAFNCRCKEENCAILRELVRLRAQKSRLLGFSTHADYVLEMNMAKTSQVVATFLDELAQKLKPLGEQERAVILELKRAECEQRGLAFDGRINAWDMRYYMNQVEETRYRVDQNLLKEYFPMQVVTRGLLGIYQELLGLSFQLEEGAAVWHEDVALYAVRDAASGKLIGKFYLDLYPREGKYGHAACFGLQPGCLRKDGSRQIAIAAMVANFTKPTPDAPSLLQHDEVETYFHEFGHVMHQLCSQAEFAMFSGTHVERDFVEAPSQMLENWVWEAEPLLRMSQHYRTGSSIPQELLDKLIKSRQANTGLFNLRQIVLAKVDQALHTQTAADPAKEYARLCQEILGVPATPGTNMPATFGHLAGGYDAQYYGYLWSEVYSADMFHTRFKQEGVLSGKVGMDYRSCILRPGGSEDASVMLKLFLGRDPKQDAFLLSKGLQVEGCEPPAC</sequence>
<name>THOP1_BOVIN</name>
<reference key="1">
    <citation type="journal article" date="2005" name="BMC Genomics">
        <title>Characterization of 954 bovine full-CDS cDNA sequences.</title>
        <authorList>
            <person name="Harhay G.P."/>
            <person name="Sonstegard T.S."/>
            <person name="Keele J.W."/>
            <person name="Heaton M.P."/>
            <person name="Clawson M.L."/>
            <person name="Snelling W.M."/>
            <person name="Wiedmann R.T."/>
            <person name="Van Tassell C.P."/>
            <person name="Smith T.P.L."/>
        </authorList>
    </citation>
    <scope>NUCLEOTIDE SEQUENCE [LARGE SCALE MRNA]</scope>
</reference>
<reference key="2">
    <citation type="submission" date="2007-07" db="EMBL/GenBank/DDBJ databases">
        <authorList>
            <consortium name="NIH - Mammalian Gene Collection (MGC) project"/>
        </authorList>
    </citation>
    <scope>NUCLEOTIDE SEQUENCE [LARGE SCALE MRNA]</scope>
    <source>
        <strain>Hereford</strain>
        <tissue>Thymus</tissue>
    </source>
</reference>
<dbReference type="EC" id="3.4.24.15" evidence="3"/>
<dbReference type="EMBL" id="BT025355">
    <property type="protein sequence ID" value="ABF57311.1"/>
    <property type="molecule type" value="mRNA"/>
</dbReference>
<dbReference type="EMBL" id="BC149983">
    <property type="protein sequence ID" value="AAI49984.1"/>
    <property type="molecule type" value="mRNA"/>
</dbReference>
<dbReference type="RefSeq" id="NP_001029163.2">
    <property type="nucleotide sequence ID" value="NM_001033991.3"/>
</dbReference>
<dbReference type="SMR" id="Q1JPJ8"/>
<dbReference type="FunCoup" id="Q1JPJ8">
    <property type="interactions" value="2258"/>
</dbReference>
<dbReference type="STRING" id="9913.ENSBTAP00000061646"/>
<dbReference type="MEROPS" id="M03.001"/>
<dbReference type="PaxDb" id="9913-ENSBTAP00000027246"/>
<dbReference type="PeptideAtlas" id="Q1JPJ8"/>
<dbReference type="GeneID" id="510889"/>
<dbReference type="KEGG" id="bta:510889"/>
<dbReference type="CTD" id="7064"/>
<dbReference type="eggNOG" id="KOG2089">
    <property type="taxonomic scope" value="Eukaryota"/>
</dbReference>
<dbReference type="HOGENOM" id="CLU_001805_2_0_1"/>
<dbReference type="InParanoid" id="Q1JPJ8"/>
<dbReference type="OrthoDB" id="534666at2759"/>
<dbReference type="TreeFam" id="TF300459"/>
<dbReference type="BRENDA" id="3.4.24.15">
    <property type="organism ID" value="908"/>
</dbReference>
<dbReference type="Proteomes" id="UP000009136">
    <property type="component" value="Unplaced"/>
</dbReference>
<dbReference type="GO" id="GO:0005758">
    <property type="term" value="C:mitochondrial intermembrane space"/>
    <property type="evidence" value="ECO:0000318"/>
    <property type="project" value="GO_Central"/>
</dbReference>
<dbReference type="GO" id="GO:0046872">
    <property type="term" value="F:metal ion binding"/>
    <property type="evidence" value="ECO:0007669"/>
    <property type="project" value="UniProtKB-KW"/>
</dbReference>
<dbReference type="GO" id="GO:0004222">
    <property type="term" value="F:metalloendopeptidase activity"/>
    <property type="evidence" value="ECO:0000318"/>
    <property type="project" value="GO_Central"/>
</dbReference>
<dbReference type="GO" id="GO:0006518">
    <property type="term" value="P:peptide metabolic process"/>
    <property type="evidence" value="ECO:0000318"/>
    <property type="project" value="GO_Central"/>
</dbReference>
<dbReference type="GO" id="GO:0006508">
    <property type="term" value="P:proteolysis"/>
    <property type="evidence" value="ECO:0000318"/>
    <property type="project" value="GO_Central"/>
</dbReference>
<dbReference type="CDD" id="cd06455">
    <property type="entry name" value="M3A_TOP"/>
    <property type="match status" value="1"/>
</dbReference>
<dbReference type="FunFam" id="1.10.1370.10:FF:000016">
    <property type="entry name" value="Thimet oligopeptidase 1"/>
    <property type="match status" value="1"/>
</dbReference>
<dbReference type="FunFam" id="1.20.1050.40:FF:000001">
    <property type="entry name" value="Thimet oligopeptidase 1"/>
    <property type="match status" value="1"/>
</dbReference>
<dbReference type="FunFam" id="3.40.390.10:FF:000006">
    <property type="entry name" value="Thimet oligopeptidase 1"/>
    <property type="match status" value="1"/>
</dbReference>
<dbReference type="Gene3D" id="3.40.390.10">
    <property type="entry name" value="Collagenase (Catalytic Domain)"/>
    <property type="match status" value="1"/>
</dbReference>
<dbReference type="Gene3D" id="1.20.1050.40">
    <property type="entry name" value="Endopeptidase. Chain P, domain 1"/>
    <property type="match status" value="1"/>
</dbReference>
<dbReference type="Gene3D" id="1.10.1370.10">
    <property type="entry name" value="Neurolysin, domain 3"/>
    <property type="match status" value="1"/>
</dbReference>
<dbReference type="InterPro" id="IPR024079">
    <property type="entry name" value="MetalloPept_cat_dom_sf"/>
</dbReference>
<dbReference type="InterPro" id="IPR024077">
    <property type="entry name" value="Neurolysin/TOP_dom2"/>
</dbReference>
<dbReference type="InterPro" id="IPR024080">
    <property type="entry name" value="Neurolysin/TOP_N"/>
</dbReference>
<dbReference type="InterPro" id="IPR045090">
    <property type="entry name" value="Pept_M3A_M3B"/>
</dbReference>
<dbReference type="InterPro" id="IPR001567">
    <property type="entry name" value="Pept_M3A_M3B_dom"/>
</dbReference>
<dbReference type="PANTHER" id="PTHR11804">
    <property type="entry name" value="PROTEASE M3 THIMET OLIGOPEPTIDASE-RELATED"/>
    <property type="match status" value="1"/>
</dbReference>
<dbReference type="PANTHER" id="PTHR11804:SF50">
    <property type="entry name" value="THIMET OLIGOPEPTIDASE"/>
    <property type="match status" value="1"/>
</dbReference>
<dbReference type="Pfam" id="PF01432">
    <property type="entry name" value="Peptidase_M3"/>
    <property type="match status" value="1"/>
</dbReference>
<dbReference type="SUPFAM" id="SSF55486">
    <property type="entry name" value="Metalloproteases ('zincins'), catalytic domain"/>
    <property type="match status" value="1"/>
</dbReference>
<dbReference type="PROSITE" id="PS00142">
    <property type="entry name" value="ZINC_PROTEASE"/>
    <property type="match status" value="1"/>
</dbReference>
<proteinExistence type="evidence at transcript level"/>
<accession>Q1JPJ8</accession>
<accession>A6QQT3</accession>
<organism>
    <name type="scientific">Bos taurus</name>
    <name type="common">Bovine</name>
    <dbReference type="NCBI Taxonomy" id="9913"/>
    <lineage>
        <taxon>Eukaryota</taxon>
        <taxon>Metazoa</taxon>
        <taxon>Chordata</taxon>
        <taxon>Craniata</taxon>
        <taxon>Vertebrata</taxon>
        <taxon>Euteleostomi</taxon>
        <taxon>Mammalia</taxon>
        <taxon>Eutheria</taxon>
        <taxon>Laurasiatheria</taxon>
        <taxon>Artiodactyla</taxon>
        <taxon>Ruminantia</taxon>
        <taxon>Pecora</taxon>
        <taxon>Bovidae</taxon>
        <taxon>Bovinae</taxon>
        <taxon>Bos</taxon>
    </lineage>
</organism>